<proteinExistence type="inferred from homology"/>
<name>PRMA_CHESB</name>
<evidence type="ECO:0000255" key="1">
    <source>
        <dbReference type="HAMAP-Rule" id="MF_00735"/>
    </source>
</evidence>
<organism>
    <name type="scientific">Chelativorans sp. (strain BNC1)</name>
    <dbReference type="NCBI Taxonomy" id="266779"/>
    <lineage>
        <taxon>Bacteria</taxon>
        <taxon>Pseudomonadati</taxon>
        <taxon>Pseudomonadota</taxon>
        <taxon>Alphaproteobacteria</taxon>
        <taxon>Hyphomicrobiales</taxon>
        <taxon>Phyllobacteriaceae</taxon>
        <taxon>Chelativorans</taxon>
    </lineage>
</organism>
<feature type="chain" id="PRO_1000192645" description="Ribosomal protein L11 methyltransferase">
    <location>
        <begin position="1"/>
        <end position="290"/>
    </location>
</feature>
<feature type="binding site" evidence="1">
    <location>
        <position position="135"/>
    </location>
    <ligand>
        <name>S-adenosyl-L-methionine</name>
        <dbReference type="ChEBI" id="CHEBI:59789"/>
    </ligand>
</feature>
<feature type="binding site" evidence="1">
    <location>
        <position position="158"/>
    </location>
    <ligand>
        <name>S-adenosyl-L-methionine</name>
        <dbReference type="ChEBI" id="CHEBI:59789"/>
    </ligand>
</feature>
<feature type="binding site" evidence="1">
    <location>
        <position position="180"/>
    </location>
    <ligand>
        <name>S-adenosyl-L-methionine</name>
        <dbReference type="ChEBI" id="CHEBI:59789"/>
    </ligand>
</feature>
<feature type="binding site" evidence="1">
    <location>
        <position position="227"/>
    </location>
    <ligand>
        <name>S-adenosyl-L-methionine</name>
        <dbReference type="ChEBI" id="CHEBI:59789"/>
    </ligand>
</feature>
<comment type="function">
    <text evidence="1">Methylates ribosomal protein L11.</text>
</comment>
<comment type="catalytic activity">
    <reaction evidence="1">
        <text>L-lysyl-[protein] + 3 S-adenosyl-L-methionine = N(6),N(6),N(6)-trimethyl-L-lysyl-[protein] + 3 S-adenosyl-L-homocysteine + 3 H(+)</text>
        <dbReference type="Rhea" id="RHEA:54192"/>
        <dbReference type="Rhea" id="RHEA-COMP:9752"/>
        <dbReference type="Rhea" id="RHEA-COMP:13826"/>
        <dbReference type="ChEBI" id="CHEBI:15378"/>
        <dbReference type="ChEBI" id="CHEBI:29969"/>
        <dbReference type="ChEBI" id="CHEBI:57856"/>
        <dbReference type="ChEBI" id="CHEBI:59789"/>
        <dbReference type="ChEBI" id="CHEBI:61961"/>
    </reaction>
</comment>
<comment type="subcellular location">
    <subcellularLocation>
        <location evidence="1">Cytoplasm</location>
    </subcellularLocation>
</comment>
<comment type="similarity">
    <text evidence="1">Belongs to the methyltransferase superfamily. PrmA family.</text>
</comment>
<protein>
    <recommendedName>
        <fullName evidence="1">Ribosomal protein L11 methyltransferase</fullName>
        <shortName evidence="1">L11 Mtase</shortName>
        <ecNumber evidence="1">2.1.1.-</ecNumber>
    </recommendedName>
</protein>
<dbReference type="EC" id="2.1.1.-" evidence="1"/>
<dbReference type="EMBL" id="CP000390">
    <property type="protein sequence ID" value="ABG63386.1"/>
    <property type="molecule type" value="Genomic_DNA"/>
</dbReference>
<dbReference type="SMR" id="Q11GT9"/>
<dbReference type="STRING" id="266779.Meso_1993"/>
<dbReference type="KEGG" id="mes:Meso_1993"/>
<dbReference type="eggNOG" id="COG2264">
    <property type="taxonomic scope" value="Bacteria"/>
</dbReference>
<dbReference type="HOGENOM" id="CLU_049382_3_0_5"/>
<dbReference type="OrthoDB" id="9785995at2"/>
<dbReference type="GO" id="GO:0005737">
    <property type="term" value="C:cytoplasm"/>
    <property type="evidence" value="ECO:0007669"/>
    <property type="project" value="UniProtKB-SubCell"/>
</dbReference>
<dbReference type="GO" id="GO:0016279">
    <property type="term" value="F:protein-lysine N-methyltransferase activity"/>
    <property type="evidence" value="ECO:0007669"/>
    <property type="project" value="RHEA"/>
</dbReference>
<dbReference type="GO" id="GO:0032259">
    <property type="term" value="P:methylation"/>
    <property type="evidence" value="ECO:0007669"/>
    <property type="project" value="UniProtKB-KW"/>
</dbReference>
<dbReference type="CDD" id="cd02440">
    <property type="entry name" value="AdoMet_MTases"/>
    <property type="match status" value="1"/>
</dbReference>
<dbReference type="Gene3D" id="3.40.50.150">
    <property type="entry name" value="Vaccinia Virus protein VP39"/>
    <property type="match status" value="1"/>
</dbReference>
<dbReference type="HAMAP" id="MF_00735">
    <property type="entry name" value="Methyltr_PrmA"/>
    <property type="match status" value="1"/>
</dbReference>
<dbReference type="InterPro" id="IPR050078">
    <property type="entry name" value="Ribosomal_L11_MeTrfase_PrmA"/>
</dbReference>
<dbReference type="InterPro" id="IPR004498">
    <property type="entry name" value="Ribosomal_PrmA_MeTrfase"/>
</dbReference>
<dbReference type="InterPro" id="IPR029063">
    <property type="entry name" value="SAM-dependent_MTases_sf"/>
</dbReference>
<dbReference type="NCBIfam" id="NF001784">
    <property type="entry name" value="PRK00517.2-1"/>
    <property type="match status" value="1"/>
</dbReference>
<dbReference type="PANTHER" id="PTHR43648">
    <property type="entry name" value="ELECTRON TRANSFER FLAVOPROTEIN BETA SUBUNIT LYSINE METHYLTRANSFERASE"/>
    <property type="match status" value="1"/>
</dbReference>
<dbReference type="PANTHER" id="PTHR43648:SF1">
    <property type="entry name" value="ELECTRON TRANSFER FLAVOPROTEIN BETA SUBUNIT LYSINE METHYLTRANSFERASE"/>
    <property type="match status" value="1"/>
</dbReference>
<dbReference type="Pfam" id="PF06325">
    <property type="entry name" value="PrmA"/>
    <property type="match status" value="1"/>
</dbReference>
<dbReference type="SUPFAM" id="SSF53335">
    <property type="entry name" value="S-adenosyl-L-methionine-dependent methyltransferases"/>
    <property type="match status" value="1"/>
</dbReference>
<keyword id="KW-0963">Cytoplasm</keyword>
<keyword id="KW-0489">Methyltransferase</keyword>
<keyword id="KW-0949">S-adenosyl-L-methionine</keyword>
<keyword id="KW-0808">Transferase</keyword>
<gene>
    <name evidence="1" type="primary">prmA</name>
    <name type="ordered locus">Meso_1993</name>
</gene>
<reference key="1">
    <citation type="submission" date="2006-06" db="EMBL/GenBank/DDBJ databases">
        <title>Complete sequence of chromosome of Mesorhizobium sp. BNC1.</title>
        <authorList>
            <consortium name="US DOE Joint Genome Institute"/>
            <person name="Copeland A."/>
            <person name="Lucas S."/>
            <person name="Lapidus A."/>
            <person name="Barry K."/>
            <person name="Detter J.C."/>
            <person name="Glavina del Rio T."/>
            <person name="Hammon N."/>
            <person name="Israni S."/>
            <person name="Dalin E."/>
            <person name="Tice H."/>
            <person name="Pitluck S."/>
            <person name="Chertkov O."/>
            <person name="Brettin T."/>
            <person name="Bruce D."/>
            <person name="Han C."/>
            <person name="Tapia R."/>
            <person name="Gilna P."/>
            <person name="Schmutz J."/>
            <person name="Larimer F."/>
            <person name="Land M."/>
            <person name="Hauser L."/>
            <person name="Kyrpides N."/>
            <person name="Mikhailova N."/>
            <person name="Richardson P."/>
        </authorList>
    </citation>
    <scope>NUCLEOTIDE SEQUENCE [LARGE SCALE GENOMIC DNA]</scope>
    <source>
        <strain>BNC1</strain>
    </source>
</reference>
<accession>Q11GT9</accession>
<sequence>MPQTRLFFRSNGAPAREAFSRLEAAFEEDGLPLAIRELDEERDIHEVSIYASEDWEGVADRMRSCLTSIAGLSEIETEELPEIDWVAHSLAGLKAVRAGRFFVHGSHERGQHRAGEIPIEIEASLAFGTGHHGTTSGCLEMISRVVPREHPRNALDLGTGSAVLAIAIARLAHIPVLATDIDPVAVRVARENVRLNRAAEWVETAAAPGFHHPAFARRMPFDLIVANILARPLIGLAPAMARHLSPGGSLILSGILTHQRRQVIAGYVGQGFRHLTTLHREEWVTIHMKR</sequence>